<gene>
    <name type="primary">yqjD</name>
    <name type="ordered locus">BSU23920</name>
</gene>
<accession>P54541</accession>
<name>PCCB_BACSU</name>
<reference key="1">
    <citation type="journal article" date="1996" name="Microbiology">
        <title>Systematic sequencing of the 283 kb 210 degrees-232 degrees region of the Bacillus subtilis genome containing the skin element and many sporulation genes.</title>
        <authorList>
            <person name="Mizuno M."/>
            <person name="Masuda S."/>
            <person name="Takemaru K."/>
            <person name="Hosono S."/>
            <person name="Sato T."/>
            <person name="Takeuchi M."/>
            <person name="Kobayashi Y."/>
        </authorList>
    </citation>
    <scope>NUCLEOTIDE SEQUENCE [GENOMIC DNA]</scope>
    <source>
        <strain>168 / JH642</strain>
    </source>
</reference>
<reference key="2">
    <citation type="journal article" date="1997" name="Nature">
        <title>The complete genome sequence of the Gram-positive bacterium Bacillus subtilis.</title>
        <authorList>
            <person name="Kunst F."/>
            <person name="Ogasawara N."/>
            <person name="Moszer I."/>
            <person name="Albertini A.M."/>
            <person name="Alloni G."/>
            <person name="Azevedo V."/>
            <person name="Bertero M.G."/>
            <person name="Bessieres P."/>
            <person name="Bolotin A."/>
            <person name="Borchert S."/>
            <person name="Borriss R."/>
            <person name="Boursier L."/>
            <person name="Brans A."/>
            <person name="Braun M."/>
            <person name="Brignell S.C."/>
            <person name="Bron S."/>
            <person name="Brouillet S."/>
            <person name="Bruschi C.V."/>
            <person name="Caldwell B."/>
            <person name="Capuano V."/>
            <person name="Carter N.M."/>
            <person name="Choi S.-K."/>
            <person name="Codani J.-J."/>
            <person name="Connerton I.F."/>
            <person name="Cummings N.J."/>
            <person name="Daniel R.A."/>
            <person name="Denizot F."/>
            <person name="Devine K.M."/>
            <person name="Duesterhoeft A."/>
            <person name="Ehrlich S.D."/>
            <person name="Emmerson P.T."/>
            <person name="Entian K.-D."/>
            <person name="Errington J."/>
            <person name="Fabret C."/>
            <person name="Ferrari E."/>
            <person name="Foulger D."/>
            <person name="Fritz C."/>
            <person name="Fujita M."/>
            <person name="Fujita Y."/>
            <person name="Fuma S."/>
            <person name="Galizzi A."/>
            <person name="Galleron N."/>
            <person name="Ghim S.-Y."/>
            <person name="Glaser P."/>
            <person name="Goffeau A."/>
            <person name="Golightly E.J."/>
            <person name="Grandi G."/>
            <person name="Guiseppi G."/>
            <person name="Guy B.J."/>
            <person name="Haga K."/>
            <person name="Haiech J."/>
            <person name="Harwood C.R."/>
            <person name="Henaut A."/>
            <person name="Hilbert H."/>
            <person name="Holsappel S."/>
            <person name="Hosono S."/>
            <person name="Hullo M.-F."/>
            <person name="Itaya M."/>
            <person name="Jones L.-M."/>
            <person name="Joris B."/>
            <person name="Karamata D."/>
            <person name="Kasahara Y."/>
            <person name="Klaerr-Blanchard M."/>
            <person name="Klein C."/>
            <person name="Kobayashi Y."/>
            <person name="Koetter P."/>
            <person name="Koningstein G."/>
            <person name="Krogh S."/>
            <person name="Kumano M."/>
            <person name="Kurita K."/>
            <person name="Lapidus A."/>
            <person name="Lardinois S."/>
            <person name="Lauber J."/>
            <person name="Lazarevic V."/>
            <person name="Lee S.-M."/>
            <person name="Levine A."/>
            <person name="Liu H."/>
            <person name="Masuda S."/>
            <person name="Mauel C."/>
            <person name="Medigue C."/>
            <person name="Medina N."/>
            <person name="Mellado R.P."/>
            <person name="Mizuno M."/>
            <person name="Moestl D."/>
            <person name="Nakai S."/>
            <person name="Noback M."/>
            <person name="Noone D."/>
            <person name="O'Reilly M."/>
            <person name="Ogawa K."/>
            <person name="Ogiwara A."/>
            <person name="Oudega B."/>
            <person name="Park S.-H."/>
            <person name="Parro V."/>
            <person name="Pohl T.M."/>
            <person name="Portetelle D."/>
            <person name="Porwollik S."/>
            <person name="Prescott A.M."/>
            <person name="Presecan E."/>
            <person name="Pujic P."/>
            <person name="Purnelle B."/>
            <person name="Rapoport G."/>
            <person name="Rey M."/>
            <person name="Reynolds S."/>
            <person name="Rieger M."/>
            <person name="Rivolta C."/>
            <person name="Rocha E."/>
            <person name="Roche B."/>
            <person name="Rose M."/>
            <person name="Sadaie Y."/>
            <person name="Sato T."/>
            <person name="Scanlan E."/>
            <person name="Schleich S."/>
            <person name="Schroeter R."/>
            <person name="Scoffone F."/>
            <person name="Sekiguchi J."/>
            <person name="Sekowska A."/>
            <person name="Seror S.J."/>
            <person name="Serror P."/>
            <person name="Shin B.-S."/>
            <person name="Soldo B."/>
            <person name="Sorokin A."/>
            <person name="Tacconi E."/>
            <person name="Takagi T."/>
            <person name="Takahashi H."/>
            <person name="Takemaru K."/>
            <person name="Takeuchi M."/>
            <person name="Tamakoshi A."/>
            <person name="Tanaka T."/>
            <person name="Terpstra P."/>
            <person name="Tognoni A."/>
            <person name="Tosato V."/>
            <person name="Uchiyama S."/>
            <person name="Vandenbol M."/>
            <person name="Vannier F."/>
            <person name="Vassarotti A."/>
            <person name="Viari A."/>
            <person name="Wambutt R."/>
            <person name="Wedler E."/>
            <person name="Wedler H."/>
            <person name="Weitzenegger T."/>
            <person name="Winters P."/>
            <person name="Wipat A."/>
            <person name="Yamamoto H."/>
            <person name="Yamane K."/>
            <person name="Yasumoto K."/>
            <person name="Yata K."/>
            <person name="Yoshida K."/>
            <person name="Yoshikawa H.-F."/>
            <person name="Zumstein E."/>
            <person name="Yoshikawa H."/>
            <person name="Danchin A."/>
        </authorList>
    </citation>
    <scope>NUCLEOTIDE SEQUENCE [LARGE SCALE GENOMIC DNA]</scope>
    <source>
        <strain>168</strain>
    </source>
</reference>
<reference key="3">
    <citation type="journal article" date="2009" name="Microbiology">
        <title>From a consortium sequence to a unified sequence: the Bacillus subtilis 168 reference genome a decade later.</title>
        <authorList>
            <person name="Barbe V."/>
            <person name="Cruveiller S."/>
            <person name="Kunst F."/>
            <person name="Lenoble P."/>
            <person name="Meurice G."/>
            <person name="Sekowska A."/>
            <person name="Vallenet D."/>
            <person name="Wang T."/>
            <person name="Moszer I."/>
            <person name="Medigue C."/>
            <person name="Danchin A."/>
        </authorList>
    </citation>
    <scope>SEQUENCE REVISION TO N-TERMINUS</scope>
</reference>
<comment type="catalytic activity">
    <reaction>
        <text>propanoyl-CoA + hydrogencarbonate + ATP = (S)-methylmalonyl-CoA + ADP + phosphate + H(+)</text>
        <dbReference type="Rhea" id="RHEA:23720"/>
        <dbReference type="ChEBI" id="CHEBI:15378"/>
        <dbReference type="ChEBI" id="CHEBI:17544"/>
        <dbReference type="ChEBI" id="CHEBI:30616"/>
        <dbReference type="ChEBI" id="CHEBI:43474"/>
        <dbReference type="ChEBI" id="CHEBI:57327"/>
        <dbReference type="ChEBI" id="CHEBI:57392"/>
        <dbReference type="ChEBI" id="CHEBI:456216"/>
        <dbReference type="EC" id="6.4.1.3"/>
    </reaction>
</comment>
<comment type="pathway">
    <text>Metabolic intermediate metabolism; propanoyl-CoA degradation; succinyl-CoA from propanoyl-CoA: step 1/3.</text>
</comment>
<comment type="subunit">
    <text evidence="1">Probably a dodecamer composed of six biotin-containing alpha subunits and six beta subunits.</text>
</comment>
<comment type="similarity">
    <text evidence="6">Belongs to the AccD/PCCB family.</text>
</comment>
<comment type="sequence caution" evidence="6">
    <conflict type="frameshift">
        <sequence resource="EMBL-CDS" id="BAA12610"/>
    </conflict>
</comment>
<sequence length="507" mass="55475">MNEHMDHFYTKRKQAEEGGGREKLAQQRQKGKLTARERIIFLLDQDSFIELHPFMESQVLTREQRMLGDGVVTGYGTIDGRSVYVFAQDFTVYGGALGETHARKICALMDLAAKNKAPIIGLNDSGGARIQEGVLSLDGYGHIFYRNVLYSGVIPQISVILGPCAGGAVYSPALTDFIFMAEQTGRMFITGPKVIEKVTGEQVDAESLGGAGIHNAVSGNAHFSGHTEKEVLTGVRKLLSYLPLNGRTTEPKPEKEASRPLLNRLVPADTTKPYDVRKVIRELADPQSFFEIQPFFAKNIVIGFARLGEKAIGIVASQPKHLAGSLTIDAADKAARFIRFCDAFDIPLLTVEDVPGFLPGIQQEHNGIIRHGAKLLFAYAEATVPKVTLIIRKAYGGAYVAMNSKAIGADLVFAWPNAEIAVMGPEGAASILYEKEIKASADPQKTKREKTAEYKKQNAGPYKAAACGMVDDIILPEESRGRLIQAFHMLTHKTEERPKKKHGNIPL</sequence>
<proteinExistence type="inferred from homology"/>
<dbReference type="EC" id="6.4.1.3"/>
<dbReference type="EMBL" id="D84432">
    <property type="protein sequence ID" value="BAA12610.1"/>
    <property type="status" value="ALT_FRAME"/>
    <property type="molecule type" value="Genomic_DNA"/>
</dbReference>
<dbReference type="EMBL" id="AL009126">
    <property type="protein sequence ID" value="CAB14323.2"/>
    <property type="molecule type" value="Genomic_DNA"/>
</dbReference>
<dbReference type="PIR" id="D69963">
    <property type="entry name" value="D69963"/>
</dbReference>
<dbReference type="RefSeq" id="NP_390272.2">
    <property type="nucleotide sequence ID" value="NC_000964.3"/>
</dbReference>
<dbReference type="RefSeq" id="WP_010886564.1">
    <property type="nucleotide sequence ID" value="NZ_OZ025638.1"/>
</dbReference>
<dbReference type="SMR" id="P54541"/>
<dbReference type="FunCoup" id="P54541">
    <property type="interactions" value="338"/>
</dbReference>
<dbReference type="STRING" id="224308.BSU23920"/>
<dbReference type="PaxDb" id="224308-BSU23920"/>
<dbReference type="EnsemblBacteria" id="CAB14323">
    <property type="protein sequence ID" value="CAB14323"/>
    <property type="gene ID" value="BSU_23920"/>
</dbReference>
<dbReference type="GeneID" id="938685"/>
<dbReference type="KEGG" id="bsu:BSU23920"/>
<dbReference type="PATRIC" id="fig|224308.43.peg.2495"/>
<dbReference type="eggNOG" id="COG4799">
    <property type="taxonomic scope" value="Bacteria"/>
</dbReference>
<dbReference type="InParanoid" id="P54541"/>
<dbReference type="OrthoDB" id="9803706at2"/>
<dbReference type="PhylomeDB" id="P54541"/>
<dbReference type="BioCyc" id="BSUB:BSU23920-MONOMER"/>
<dbReference type="UniPathway" id="UPA00945">
    <property type="reaction ID" value="UER00908"/>
</dbReference>
<dbReference type="Proteomes" id="UP000001570">
    <property type="component" value="Chromosome"/>
</dbReference>
<dbReference type="GO" id="GO:0009317">
    <property type="term" value="C:acetyl-CoA carboxylase complex"/>
    <property type="evidence" value="ECO:0000318"/>
    <property type="project" value="GO_Central"/>
</dbReference>
<dbReference type="GO" id="GO:0003989">
    <property type="term" value="F:acetyl-CoA carboxylase activity"/>
    <property type="evidence" value="ECO:0007669"/>
    <property type="project" value="InterPro"/>
</dbReference>
<dbReference type="GO" id="GO:0005524">
    <property type="term" value="F:ATP binding"/>
    <property type="evidence" value="ECO:0007669"/>
    <property type="project" value="UniProtKB-KW"/>
</dbReference>
<dbReference type="GO" id="GO:0004658">
    <property type="term" value="F:propionyl-CoA carboxylase activity"/>
    <property type="evidence" value="ECO:0000318"/>
    <property type="project" value="GO_Central"/>
</dbReference>
<dbReference type="GO" id="GO:0006633">
    <property type="term" value="P:fatty acid biosynthetic process"/>
    <property type="evidence" value="ECO:0007669"/>
    <property type="project" value="InterPro"/>
</dbReference>
<dbReference type="Gene3D" id="3.90.226.10">
    <property type="entry name" value="2-enoyl-CoA Hydratase, Chain A, domain 1"/>
    <property type="match status" value="2"/>
</dbReference>
<dbReference type="InterPro" id="IPR051047">
    <property type="entry name" value="AccD/PCCB"/>
</dbReference>
<dbReference type="InterPro" id="IPR034733">
    <property type="entry name" value="AcCoA_carboxyl_beta"/>
</dbReference>
<dbReference type="InterPro" id="IPR000438">
    <property type="entry name" value="Acetyl_CoA_COase_Trfase_b_su"/>
</dbReference>
<dbReference type="InterPro" id="IPR029045">
    <property type="entry name" value="ClpP/crotonase-like_dom_sf"/>
</dbReference>
<dbReference type="InterPro" id="IPR011763">
    <property type="entry name" value="COA_CT_C"/>
</dbReference>
<dbReference type="InterPro" id="IPR011762">
    <property type="entry name" value="COA_CT_N"/>
</dbReference>
<dbReference type="PANTHER" id="PTHR43842">
    <property type="entry name" value="PROPIONYL-COA CARBOXYLASE BETA CHAIN"/>
    <property type="match status" value="1"/>
</dbReference>
<dbReference type="PANTHER" id="PTHR43842:SF2">
    <property type="entry name" value="PROPIONYL-COA CARBOXYLASE BETA CHAIN, MITOCHONDRIAL"/>
    <property type="match status" value="1"/>
</dbReference>
<dbReference type="Pfam" id="PF01039">
    <property type="entry name" value="Carboxyl_trans"/>
    <property type="match status" value="1"/>
</dbReference>
<dbReference type="PRINTS" id="PR01070">
    <property type="entry name" value="ACCCTRFRASEB"/>
</dbReference>
<dbReference type="SUPFAM" id="SSF52096">
    <property type="entry name" value="ClpP/crotonase"/>
    <property type="match status" value="2"/>
</dbReference>
<dbReference type="PROSITE" id="PS50989">
    <property type="entry name" value="COA_CT_CTER"/>
    <property type="match status" value="1"/>
</dbReference>
<dbReference type="PROSITE" id="PS50980">
    <property type="entry name" value="COA_CT_NTER"/>
    <property type="match status" value="1"/>
</dbReference>
<evidence type="ECO:0000250" key="1"/>
<evidence type="ECO:0000255" key="2">
    <source>
        <dbReference type="PROSITE-ProRule" id="PRU01136"/>
    </source>
</evidence>
<evidence type="ECO:0000255" key="3">
    <source>
        <dbReference type="PROSITE-ProRule" id="PRU01137"/>
    </source>
</evidence>
<evidence type="ECO:0000255" key="4">
    <source>
        <dbReference type="PROSITE-ProRule" id="PRU01138"/>
    </source>
</evidence>
<evidence type="ECO:0000256" key="5">
    <source>
        <dbReference type="SAM" id="MobiDB-lite"/>
    </source>
</evidence>
<evidence type="ECO:0000305" key="6"/>
<feature type="chain" id="PRO_0000199797" description="Putative propionyl-CoA carboxylase beta chain">
    <location>
        <begin position="1"/>
        <end position="507"/>
    </location>
</feature>
<feature type="domain" description="CoA carboxyltransferase N-terminal" evidence="2">
    <location>
        <begin position="1"/>
        <end position="254"/>
    </location>
</feature>
<feature type="domain" description="CoA carboxyltransferase C-terminal" evidence="3">
    <location>
        <begin position="256"/>
        <end position="501"/>
    </location>
</feature>
<feature type="region of interest" description="Carboxyltransferase" evidence="4">
    <location>
        <begin position="1"/>
        <end position="501"/>
    </location>
</feature>
<feature type="region of interest" description="Disordered" evidence="5">
    <location>
        <begin position="1"/>
        <end position="30"/>
    </location>
</feature>
<feature type="compositionally biased region" description="Basic and acidic residues" evidence="5">
    <location>
        <begin position="1"/>
        <end position="25"/>
    </location>
</feature>
<keyword id="KW-0067">ATP-binding</keyword>
<keyword id="KW-0436">Ligase</keyword>
<keyword id="KW-0547">Nucleotide-binding</keyword>
<keyword id="KW-1185">Reference proteome</keyword>
<organism>
    <name type="scientific">Bacillus subtilis (strain 168)</name>
    <dbReference type="NCBI Taxonomy" id="224308"/>
    <lineage>
        <taxon>Bacteria</taxon>
        <taxon>Bacillati</taxon>
        <taxon>Bacillota</taxon>
        <taxon>Bacilli</taxon>
        <taxon>Bacillales</taxon>
        <taxon>Bacillaceae</taxon>
        <taxon>Bacillus</taxon>
    </lineage>
</organism>
<protein>
    <recommendedName>
        <fullName>Putative propionyl-CoA carboxylase beta chain</fullName>
        <shortName>PCCase</shortName>
        <ecNumber>6.4.1.3</ecNumber>
    </recommendedName>
    <alternativeName>
        <fullName>Propanoyl-CoA:carbon dioxide ligase</fullName>
    </alternativeName>
</protein>